<feature type="transit peptide" description="Glyoxysome" evidence="4">
    <location>
        <begin position="1"/>
        <end position="38"/>
    </location>
</feature>
<feature type="chain" id="PRO_0000018637" description="Malate dehydrogenase 2, glyoxysomal">
    <location>
        <begin position="39"/>
        <end position="358"/>
    </location>
</feature>
<feature type="active site" description="Proton acceptor" evidence="2">
    <location>
        <position position="222"/>
    </location>
</feature>
<feature type="binding site" evidence="3">
    <location>
        <begin position="53"/>
        <end position="59"/>
    </location>
    <ligand>
        <name>NAD(+)</name>
        <dbReference type="ChEBI" id="CHEBI:57540"/>
    </ligand>
</feature>
<feature type="binding site" evidence="3">
    <location>
        <position position="79"/>
    </location>
    <ligand>
        <name>NAD(+)</name>
        <dbReference type="ChEBI" id="CHEBI:57540"/>
    </ligand>
</feature>
<feature type="binding site" evidence="5">
    <location>
        <position position="126"/>
    </location>
    <ligand>
        <name>substrate</name>
    </ligand>
</feature>
<feature type="binding site" evidence="5">
    <location>
        <position position="132"/>
    </location>
    <ligand>
        <name>substrate</name>
    </ligand>
</feature>
<feature type="binding site" evidence="3">
    <location>
        <position position="139"/>
    </location>
    <ligand>
        <name>NAD(+)</name>
        <dbReference type="ChEBI" id="CHEBI:57540"/>
    </ligand>
</feature>
<feature type="binding site" evidence="3">
    <location>
        <begin position="162"/>
        <end position="164"/>
    </location>
    <ligand>
        <name>NAD(+)</name>
        <dbReference type="ChEBI" id="CHEBI:57540"/>
    </ligand>
</feature>
<feature type="binding site" evidence="5">
    <location>
        <position position="164"/>
    </location>
    <ligand>
        <name>substrate</name>
    </ligand>
</feature>
<feature type="binding site" evidence="5">
    <location>
        <position position="198"/>
    </location>
    <ligand>
        <name>substrate</name>
    </ligand>
</feature>
<feature type="binding site" evidence="3">
    <location>
        <position position="273"/>
    </location>
    <ligand>
        <name>NAD(+)</name>
        <dbReference type="ChEBI" id="CHEBI:57540"/>
    </ligand>
</feature>
<accession>Q9XFW3</accession>
<sequence>MEFRGDANKRIAMISAHLQPSFTPQMEAKNSVMGRENCRAKGGNPGFKVAILGAAGGIGQSLSLLMKMNPLVSLLHLYDVVNAPGVTADVSHMDTGAVVRGFLGAKQLEDALTGMDLVIIPAGVPRKPGMTRDDLFKINAGIVKTLCEGVAKCCPNAIVNLISNPVNSTVAIAAEVFKKAGTYDPKKLLGVTTLDVARANTFVAEVLGLDPREVDVPVVGGHAGVTILPLLSQVKPPSSFTPSEIEYLTNRIQNGGTEVVEAKAGAGSATLSMAYAAAKFADACLRGLRGDANVIECSFVASQVTELAFFATKVRLGRTGAEEVFQLGPLNEYERVGLEKAKEELAGSIQKGVDFIRK</sequence>
<protein>
    <recommendedName>
        <fullName>Malate dehydrogenase 2, glyoxysomal</fullName>
        <ecNumber>1.1.1.37</ecNumber>
    </recommendedName>
</protein>
<gene>
    <name type="primary">MDH2</name>
</gene>
<dbReference type="EC" id="1.1.1.37"/>
<dbReference type="EMBL" id="AJ242713">
    <property type="protein sequence ID" value="CAB43995.1"/>
    <property type="molecule type" value="Genomic_DNA"/>
</dbReference>
<dbReference type="RefSeq" id="XP_013678502.1">
    <property type="nucleotide sequence ID" value="XM_013823048.1"/>
</dbReference>
<dbReference type="RefSeq" id="XP_013678503.1">
    <property type="nucleotide sequence ID" value="XM_013823049.1"/>
</dbReference>
<dbReference type="SMR" id="Q9XFW3"/>
<dbReference type="GeneID" id="106382950"/>
<dbReference type="KEGG" id="bna:106382950"/>
<dbReference type="OrthoDB" id="4069699at2759"/>
<dbReference type="GO" id="GO:0009514">
    <property type="term" value="C:glyoxysome"/>
    <property type="evidence" value="ECO:0007669"/>
    <property type="project" value="UniProtKB-SubCell"/>
</dbReference>
<dbReference type="GO" id="GO:0030060">
    <property type="term" value="F:L-malate dehydrogenase (NAD+) activity"/>
    <property type="evidence" value="ECO:0007669"/>
    <property type="project" value="UniProtKB-EC"/>
</dbReference>
<dbReference type="GO" id="GO:0006097">
    <property type="term" value="P:glyoxylate cycle"/>
    <property type="evidence" value="ECO:0007669"/>
    <property type="project" value="UniProtKB-KW"/>
</dbReference>
<dbReference type="GO" id="GO:0006108">
    <property type="term" value="P:malate metabolic process"/>
    <property type="evidence" value="ECO:0007669"/>
    <property type="project" value="InterPro"/>
</dbReference>
<dbReference type="GO" id="GO:0006099">
    <property type="term" value="P:tricarboxylic acid cycle"/>
    <property type="evidence" value="ECO:0007669"/>
    <property type="project" value="UniProtKB-KW"/>
</dbReference>
<dbReference type="CDD" id="cd01337">
    <property type="entry name" value="MDH_glyoxysomal_mitochondrial"/>
    <property type="match status" value="1"/>
</dbReference>
<dbReference type="FunFam" id="3.40.50.720:FF:000013">
    <property type="entry name" value="Malate dehydrogenase"/>
    <property type="match status" value="1"/>
</dbReference>
<dbReference type="FunFam" id="3.90.110.10:FF:000001">
    <property type="entry name" value="Malate dehydrogenase"/>
    <property type="match status" value="1"/>
</dbReference>
<dbReference type="Gene3D" id="3.90.110.10">
    <property type="entry name" value="Lactate dehydrogenase/glycoside hydrolase, family 4, C-terminal"/>
    <property type="match status" value="1"/>
</dbReference>
<dbReference type="Gene3D" id="3.40.50.720">
    <property type="entry name" value="NAD(P)-binding Rossmann-like Domain"/>
    <property type="match status" value="1"/>
</dbReference>
<dbReference type="InterPro" id="IPR001557">
    <property type="entry name" value="L-lactate/malate_DH"/>
</dbReference>
<dbReference type="InterPro" id="IPR022383">
    <property type="entry name" value="Lactate/malate_DH_C"/>
</dbReference>
<dbReference type="InterPro" id="IPR001236">
    <property type="entry name" value="Lactate/malate_DH_N"/>
</dbReference>
<dbReference type="InterPro" id="IPR015955">
    <property type="entry name" value="Lactate_DH/Glyco_Ohase_4_C"/>
</dbReference>
<dbReference type="InterPro" id="IPR001252">
    <property type="entry name" value="Malate_DH_AS"/>
</dbReference>
<dbReference type="InterPro" id="IPR010097">
    <property type="entry name" value="Malate_DH_type1"/>
</dbReference>
<dbReference type="InterPro" id="IPR036291">
    <property type="entry name" value="NAD(P)-bd_dom_sf"/>
</dbReference>
<dbReference type="NCBIfam" id="TIGR01772">
    <property type="entry name" value="MDH_euk_gproteo"/>
    <property type="match status" value="1"/>
</dbReference>
<dbReference type="PANTHER" id="PTHR11540">
    <property type="entry name" value="MALATE AND LACTATE DEHYDROGENASE"/>
    <property type="match status" value="1"/>
</dbReference>
<dbReference type="PANTHER" id="PTHR11540:SF52">
    <property type="entry name" value="MALATE DEHYDROGENASE 2, PEROXISOMAL"/>
    <property type="match status" value="1"/>
</dbReference>
<dbReference type="Pfam" id="PF02866">
    <property type="entry name" value="Ldh_1_C"/>
    <property type="match status" value="1"/>
</dbReference>
<dbReference type="Pfam" id="PF00056">
    <property type="entry name" value="Ldh_1_N"/>
    <property type="match status" value="1"/>
</dbReference>
<dbReference type="PIRSF" id="PIRSF000102">
    <property type="entry name" value="Lac_mal_DH"/>
    <property type="match status" value="1"/>
</dbReference>
<dbReference type="SUPFAM" id="SSF56327">
    <property type="entry name" value="LDH C-terminal domain-like"/>
    <property type="match status" value="1"/>
</dbReference>
<dbReference type="SUPFAM" id="SSF51735">
    <property type="entry name" value="NAD(P)-binding Rossmann-fold domains"/>
    <property type="match status" value="1"/>
</dbReference>
<dbReference type="PROSITE" id="PS00068">
    <property type="entry name" value="MDH"/>
    <property type="match status" value="1"/>
</dbReference>
<reference key="1">
    <citation type="submission" date="1999-05" db="EMBL/GenBank/DDBJ databases">
        <title>Two genes encoding microbody malate dehydrogenase from Brassica napus.</title>
        <authorList>
            <person name="Imhoff U."/>
            <person name="Voetz M."/>
            <person name="Wingender R."/>
            <person name="Schnabl H."/>
            <person name="Wolf N."/>
        </authorList>
    </citation>
    <scope>NUCLEOTIDE SEQUENCE [GENOMIC DNA]</scope>
</reference>
<comment type="catalytic activity">
    <reaction evidence="5">
        <text>(S)-malate + NAD(+) = oxaloacetate + NADH + H(+)</text>
        <dbReference type="Rhea" id="RHEA:21432"/>
        <dbReference type="ChEBI" id="CHEBI:15378"/>
        <dbReference type="ChEBI" id="CHEBI:15589"/>
        <dbReference type="ChEBI" id="CHEBI:16452"/>
        <dbReference type="ChEBI" id="CHEBI:57540"/>
        <dbReference type="ChEBI" id="CHEBI:57945"/>
        <dbReference type="EC" id="1.1.1.37"/>
    </reaction>
</comment>
<comment type="subunit">
    <text evidence="1">Homodimer.</text>
</comment>
<comment type="subcellular location">
    <subcellularLocation>
        <location>Glyoxysome</location>
    </subcellularLocation>
</comment>
<comment type="similarity">
    <text evidence="6">Belongs to the LDH/MDH superfamily. MDH type 1 family.</text>
</comment>
<keyword id="KW-0329">Glyoxylate bypass</keyword>
<keyword id="KW-0330">Glyoxysome</keyword>
<keyword id="KW-0520">NAD</keyword>
<keyword id="KW-0560">Oxidoreductase</keyword>
<keyword id="KW-0576">Peroxisome</keyword>
<keyword id="KW-0809">Transit peptide</keyword>
<keyword id="KW-0816">Tricarboxylic acid cycle</keyword>
<name>MDHG2_BRANA</name>
<evidence type="ECO:0000250" key="1"/>
<evidence type="ECO:0000250" key="2">
    <source>
        <dbReference type="UniProtKB" id="P00346"/>
    </source>
</evidence>
<evidence type="ECO:0000250" key="3">
    <source>
        <dbReference type="UniProtKB" id="P40926"/>
    </source>
</evidence>
<evidence type="ECO:0000255" key="4"/>
<evidence type="ECO:0000255" key="5">
    <source>
        <dbReference type="PROSITE-ProRule" id="PRU10004"/>
    </source>
</evidence>
<evidence type="ECO:0000305" key="6"/>
<proteinExistence type="inferred from homology"/>
<organism>
    <name type="scientific">Brassica napus</name>
    <name type="common">Rape</name>
    <dbReference type="NCBI Taxonomy" id="3708"/>
    <lineage>
        <taxon>Eukaryota</taxon>
        <taxon>Viridiplantae</taxon>
        <taxon>Streptophyta</taxon>
        <taxon>Embryophyta</taxon>
        <taxon>Tracheophyta</taxon>
        <taxon>Spermatophyta</taxon>
        <taxon>Magnoliopsida</taxon>
        <taxon>eudicotyledons</taxon>
        <taxon>Gunneridae</taxon>
        <taxon>Pentapetalae</taxon>
        <taxon>rosids</taxon>
        <taxon>malvids</taxon>
        <taxon>Brassicales</taxon>
        <taxon>Brassicaceae</taxon>
        <taxon>Brassiceae</taxon>
        <taxon>Brassica</taxon>
    </lineage>
</organism>